<feature type="chain" id="PRO_0000460747" description="Urease accessory protein 7">
    <location>
        <begin position="1"/>
        <end position="312"/>
    </location>
</feature>
<feature type="region of interest" description="Disordered" evidence="1">
    <location>
        <begin position="28"/>
        <end position="86"/>
    </location>
</feature>
<feature type="region of interest" description="Histine rich nickel-binding domain" evidence="2">
    <location>
        <begin position="36"/>
        <end position="87"/>
    </location>
</feature>
<feature type="short sequence motif" description="GTP binding P-loop" evidence="5">
    <location>
        <begin position="115"/>
        <end position="122"/>
    </location>
</feature>
<feature type="short sequence motif" description="Switch domain 1" evidence="5">
    <location>
        <begin position="147"/>
        <end position="154"/>
    </location>
</feature>
<feature type="short sequence motif" description="switch domain 2" evidence="5">
    <location>
        <begin position="171"/>
        <end position="172"/>
    </location>
</feature>
<feature type="compositionally biased region" description="Basic and acidic residues" evidence="1">
    <location>
        <begin position="53"/>
        <end position="86"/>
    </location>
</feature>
<feature type="mutagenesis site" description="In ure7H2; does not affect urease activity of URE1." evidence="2">
    <original>HHHH</original>
    <variation>AAAA</variation>
    <location>
        <begin position="39"/>
        <end position="42"/>
    </location>
</feature>
<feature type="mutagenesis site" description="In ure7H3; retards greatly growth in media containing urea as the sole nitrogen source and completely abolishes the urease activity of URE1." evidence="2">
    <original>HTH</original>
    <variation>ATA</variation>
    <location>
        <begin position="80"/>
        <end position="82"/>
    </location>
</feature>
<name>URE7_CRYNH</name>
<reference key="1">
    <citation type="journal article" date="2014" name="PLoS Genet.">
        <title>Analysis of the genome and transcriptome of Cryptococcus neoformans var. grubii reveals complex RNA expression and microevolution leading to virulence attenuation.</title>
        <authorList>
            <person name="Janbon G."/>
            <person name="Ormerod K.L."/>
            <person name="Paulet D."/>
            <person name="Byrnes E.J. III"/>
            <person name="Yadav V."/>
            <person name="Chatterjee G."/>
            <person name="Mullapudi N."/>
            <person name="Hon C.-C."/>
            <person name="Billmyre R.B."/>
            <person name="Brunel F."/>
            <person name="Bahn Y.-S."/>
            <person name="Chen W."/>
            <person name="Chen Y."/>
            <person name="Chow E.W.L."/>
            <person name="Coppee J.-Y."/>
            <person name="Floyd-Averette A."/>
            <person name="Gaillardin C."/>
            <person name="Gerik K.J."/>
            <person name="Goldberg J."/>
            <person name="Gonzalez-Hilarion S."/>
            <person name="Gujja S."/>
            <person name="Hamlin J.L."/>
            <person name="Hsueh Y.-P."/>
            <person name="Ianiri G."/>
            <person name="Jones S."/>
            <person name="Kodira C.D."/>
            <person name="Kozubowski L."/>
            <person name="Lam W."/>
            <person name="Marra M."/>
            <person name="Mesner L.D."/>
            <person name="Mieczkowski P.A."/>
            <person name="Moyrand F."/>
            <person name="Nielsen K."/>
            <person name="Proux C."/>
            <person name="Rossignol T."/>
            <person name="Schein J.E."/>
            <person name="Sun S."/>
            <person name="Wollschlaeger C."/>
            <person name="Wood I.A."/>
            <person name="Zeng Q."/>
            <person name="Neuveglise C."/>
            <person name="Newlon C.S."/>
            <person name="Perfect J.R."/>
            <person name="Lodge J.K."/>
            <person name="Idnurm A."/>
            <person name="Stajich J.E."/>
            <person name="Kronstad J.W."/>
            <person name="Sanyal K."/>
            <person name="Heitman J."/>
            <person name="Fraser J.A."/>
            <person name="Cuomo C.A."/>
            <person name="Dietrich F.S."/>
        </authorList>
    </citation>
    <scope>NUCLEOTIDE SEQUENCE [LARGE SCALE GENOMIC DNA]</scope>
    <source>
        <strain>H99 / ATCC 208821 / CBS 10515 / FGSC 9487</strain>
    </source>
</reference>
<reference key="2">
    <citation type="journal article" date="2013" name="MBio">
        <title>Factors required for activation of urease as a virulence determinant in Cryptococcus neoformans.</title>
        <authorList>
            <person name="Singh A."/>
            <person name="Panting R.J."/>
            <person name="Varma A."/>
            <person name="Saijo T."/>
            <person name="Waldron K.J."/>
            <person name="Jong A."/>
            <person name="Ngamskulrungroj P."/>
            <person name="Chang Y.C."/>
            <person name="Rutherford J.C."/>
            <person name="Kwon-Chung K.J."/>
        </authorList>
    </citation>
    <scope>FUNCTION</scope>
    <scope>DISRUPTION PHENOTYPE</scope>
    <scope>SUBUNIT</scope>
    <scope>NICKEL-BINDING</scope>
    <scope>DOMAIN</scope>
    <scope>MUTAGENESIS OF 39-HIS--HIS-42 AND 80-HIS--HIS-82</scope>
</reference>
<organism>
    <name type="scientific">Cryptococcus neoformans var. grubii serotype A (strain H99 / ATCC 208821 / CBS 10515 / FGSC 9487)</name>
    <name type="common">Filobasidiella neoformans var. grubii</name>
    <dbReference type="NCBI Taxonomy" id="235443"/>
    <lineage>
        <taxon>Eukaryota</taxon>
        <taxon>Fungi</taxon>
        <taxon>Dikarya</taxon>
        <taxon>Basidiomycota</taxon>
        <taxon>Agaricomycotina</taxon>
        <taxon>Tremellomycetes</taxon>
        <taxon>Tremellales</taxon>
        <taxon>Cryptococcaceae</taxon>
        <taxon>Cryptococcus</taxon>
        <taxon>Cryptococcus neoformans species complex</taxon>
    </lineage>
</organism>
<protein>
    <recommendedName>
        <fullName evidence="3">Urease accessory protein 7</fullName>
    </recommendedName>
</protein>
<dbReference type="EMBL" id="CP003820">
    <property type="protein sequence ID" value="AFR92807.1"/>
    <property type="molecule type" value="Genomic_DNA"/>
</dbReference>
<dbReference type="RefSeq" id="XP_012046883.1">
    <property type="nucleotide sequence ID" value="XM_012191493.1"/>
</dbReference>
<dbReference type="SMR" id="J9VEN6"/>
<dbReference type="SwissPalm" id="J9VEN6"/>
<dbReference type="GeneID" id="23884460"/>
<dbReference type="KEGG" id="cng:CNAG_00678"/>
<dbReference type="VEuPathDB" id="FungiDB:CNAG_00678"/>
<dbReference type="HOGENOM" id="CLU_072144_0_0_1"/>
<dbReference type="OrthoDB" id="6619at5206"/>
<dbReference type="Proteomes" id="UP000010091">
    <property type="component" value="Chromosome 1"/>
</dbReference>
<dbReference type="GO" id="GO:0005525">
    <property type="term" value="F:GTP binding"/>
    <property type="evidence" value="ECO:0007669"/>
    <property type="project" value="UniProtKB-KW"/>
</dbReference>
<dbReference type="GO" id="GO:0003924">
    <property type="term" value="F:GTPase activity"/>
    <property type="evidence" value="ECO:0007669"/>
    <property type="project" value="InterPro"/>
</dbReference>
<dbReference type="GO" id="GO:0016151">
    <property type="term" value="F:nickel cation binding"/>
    <property type="evidence" value="ECO:0007669"/>
    <property type="project" value="InterPro"/>
</dbReference>
<dbReference type="GO" id="GO:0043419">
    <property type="term" value="P:urea catabolic process"/>
    <property type="evidence" value="ECO:0007669"/>
    <property type="project" value="InterPro"/>
</dbReference>
<dbReference type="CDD" id="cd05540">
    <property type="entry name" value="UreG"/>
    <property type="match status" value="1"/>
</dbReference>
<dbReference type="FunFam" id="3.40.50.300:FF:000208">
    <property type="entry name" value="Urease accessory protein UreG"/>
    <property type="match status" value="1"/>
</dbReference>
<dbReference type="Gene3D" id="3.40.50.300">
    <property type="entry name" value="P-loop containing nucleotide triphosphate hydrolases"/>
    <property type="match status" value="1"/>
</dbReference>
<dbReference type="HAMAP" id="MF_01389">
    <property type="entry name" value="UreG"/>
    <property type="match status" value="1"/>
</dbReference>
<dbReference type="InterPro" id="IPR003495">
    <property type="entry name" value="CobW/HypB/UreG_nucleotide-bd"/>
</dbReference>
<dbReference type="InterPro" id="IPR027417">
    <property type="entry name" value="P-loop_NTPase"/>
</dbReference>
<dbReference type="InterPro" id="IPR004400">
    <property type="entry name" value="UreG"/>
</dbReference>
<dbReference type="NCBIfam" id="TIGR00101">
    <property type="entry name" value="ureG"/>
    <property type="match status" value="1"/>
</dbReference>
<dbReference type="PANTHER" id="PTHR31715">
    <property type="entry name" value="UREASE ACCESSORY PROTEIN G"/>
    <property type="match status" value="1"/>
</dbReference>
<dbReference type="PANTHER" id="PTHR31715:SF0">
    <property type="entry name" value="UREASE ACCESSORY PROTEIN G"/>
    <property type="match status" value="1"/>
</dbReference>
<dbReference type="Pfam" id="PF02492">
    <property type="entry name" value="cobW"/>
    <property type="match status" value="1"/>
</dbReference>
<dbReference type="SUPFAM" id="SSF52540">
    <property type="entry name" value="P-loop containing nucleoside triphosphate hydrolases"/>
    <property type="match status" value="1"/>
</dbReference>
<accession>J9VEN6</accession>
<evidence type="ECO:0000256" key="1">
    <source>
        <dbReference type="SAM" id="MobiDB-lite"/>
    </source>
</evidence>
<evidence type="ECO:0000269" key="2">
    <source>
    </source>
</evidence>
<evidence type="ECO:0000303" key="3">
    <source>
    </source>
</evidence>
<evidence type="ECO:0000305" key="4"/>
<evidence type="ECO:0000305" key="5">
    <source>
    </source>
</evidence>
<proteinExistence type="evidence at protein level"/>
<keyword id="KW-0143">Chaperone</keyword>
<keyword id="KW-0342">GTP-binding</keyword>
<keyword id="KW-0996">Nickel insertion</keyword>
<keyword id="KW-0547">Nucleotide-binding</keyword>
<keyword id="KW-0843">Virulence</keyword>
<gene>
    <name evidence="3" type="primary">URE7</name>
    <name type="ORF">CNAG_00678</name>
</gene>
<sequence length="312" mass="33626">MAVPAQPSSPPPVCQFSDRLATALNAAQEATGTDSHHAHHHHTPSGASSAISHTHDNMPHDHGQFHDHGPGLWTPEEHGHTHEHLEHAGKFAERDMPDYTGRNWTERAFTVGIGGPVGSGKTALLLALCRGFREKYNIAAVTNDIFTREDQEFLIRNEALPAERIRAIETGGCPHAAIREDISANMGALEKLQAEFDTEMLFVESGGDNLAANYSRELADYIIYVIDVSGGDKIPRKGGPGITQSDLLIVNKIDLAPHVGASLDVMRRDAAAMRGTGPTLFTSVRNNDGVDAVMDIIVSAWRASQGNGKAKA</sequence>
<comment type="function">
    <text evidence="2 5">Urease accessory protein that binds 2 nickel atoms likely via its conserved histidine-rich domain and supplies nickel for the functional urease URE1 (PubMed:23653445). Has probably a dual function as a nickel chaperone and GTPase (Probable). Plays a role in host brain invasion (PubMed:23653445).</text>
</comment>
<comment type="subunit">
    <text evidence="2">URE4, URE6 and URE7 may form a complex that acts as a GTP-hydrolysis-dependent molecular chaperone, activating the urease apoprotein URE1.</text>
</comment>
<comment type="domain">
    <text evidence="2">The histidine-rich N-terminal domain is involved in nickel-binding.</text>
</comment>
<comment type="domain">
    <text evidence="5">The GTP binding P-loop probably binds GTP and the switch domains undergo a conformational change upon GTP-binding.</text>
</comment>
<comment type="disruption phenotype">
    <text evidence="2">Fails to grow on agar media with urea as the sole nitrogen source (PubMed:23653445). Leads to the inactivation of the URE1 urease and reduces the efficacy of brain invasion in mice (PubMed:23653445).</text>
</comment>
<comment type="similarity">
    <text evidence="4">Belongs to the SIMIBI class G3E GTPase family. UreG subfamily.</text>
</comment>